<proteinExistence type="evidence at protein level"/>
<comment type="tissue specificity">
    <text>Ubiquitously expressed in embryos.</text>
</comment>
<comment type="developmental stage">
    <text>Expressed throughout development, highest expression seen in second instar larvae, pupae and adults.</text>
</comment>
<comment type="similarity">
    <text evidence="2">Belongs to the CCR4/nocturin family.</text>
</comment>
<evidence type="ECO:0000256" key="1">
    <source>
        <dbReference type="SAM" id="MobiDB-lite"/>
    </source>
</evidence>
<evidence type="ECO:0000305" key="2"/>
<protein>
    <recommendedName>
        <fullName>Protein angel</fullName>
    </recommendedName>
    <alternativeName>
        <fullName>Angel 39</fullName>
        <shortName>ANG39</shortName>
    </alternativeName>
</protein>
<reference key="1">
    <citation type="journal article" date="1996" name="Biochim. Biophys. Acta">
        <title>Identification of a novel Drosophila melanogaster gene, angel, a member of a nested gene cluster at locus 59F4,5.</title>
        <authorList>
            <person name="Kurzik-Dumke U."/>
            <person name="Zengerle A."/>
        </authorList>
    </citation>
    <scope>NUCLEOTIDE SEQUENCE [GENOMIC DNA]</scope>
    <scope>CHARACTERIZATION</scope>
    <source>
        <strain>Oregon-R</strain>
        <tissue>Embryo</tissue>
    </source>
</reference>
<reference key="2">
    <citation type="journal article" date="2000" name="Science">
        <title>The genome sequence of Drosophila melanogaster.</title>
        <authorList>
            <person name="Adams M.D."/>
            <person name="Celniker S.E."/>
            <person name="Holt R.A."/>
            <person name="Evans C.A."/>
            <person name="Gocayne J.D."/>
            <person name="Amanatides P.G."/>
            <person name="Scherer S.E."/>
            <person name="Li P.W."/>
            <person name="Hoskins R.A."/>
            <person name="Galle R.F."/>
            <person name="George R.A."/>
            <person name="Lewis S.E."/>
            <person name="Richards S."/>
            <person name="Ashburner M."/>
            <person name="Henderson S.N."/>
            <person name="Sutton G.G."/>
            <person name="Wortman J.R."/>
            <person name="Yandell M.D."/>
            <person name="Zhang Q."/>
            <person name="Chen L.X."/>
            <person name="Brandon R.C."/>
            <person name="Rogers Y.-H.C."/>
            <person name="Blazej R.G."/>
            <person name="Champe M."/>
            <person name="Pfeiffer B.D."/>
            <person name="Wan K.H."/>
            <person name="Doyle C."/>
            <person name="Baxter E.G."/>
            <person name="Helt G."/>
            <person name="Nelson C.R."/>
            <person name="Miklos G.L.G."/>
            <person name="Abril J.F."/>
            <person name="Agbayani A."/>
            <person name="An H.-J."/>
            <person name="Andrews-Pfannkoch C."/>
            <person name="Baldwin D."/>
            <person name="Ballew R.M."/>
            <person name="Basu A."/>
            <person name="Baxendale J."/>
            <person name="Bayraktaroglu L."/>
            <person name="Beasley E.M."/>
            <person name="Beeson K.Y."/>
            <person name="Benos P.V."/>
            <person name="Berman B.P."/>
            <person name="Bhandari D."/>
            <person name="Bolshakov S."/>
            <person name="Borkova D."/>
            <person name="Botchan M.R."/>
            <person name="Bouck J."/>
            <person name="Brokstein P."/>
            <person name="Brottier P."/>
            <person name="Burtis K.C."/>
            <person name="Busam D.A."/>
            <person name="Butler H."/>
            <person name="Cadieu E."/>
            <person name="Center A."/>
            <person name="Chandra I."/>
            <person name="Cherry J.M."/>
            <person name="Cawley S."/>
            <person name="Dahlke C."/>
            <person name="Davenport L.B."/>
            <person name="Davies P."/>
            <person name="de Pablos B."/>
            <person name="Delcher A."/>
            <person name="Deng Z."/>
            <person name="Mays A.D."/>
            <person name="Dew I."/>
            <person name="Dietz S.M."/>
            <person name="Dodson K."/>
            <person name="Doup L.E."/>
            <person name="Downes M."/>
            <person name="Dugan-Rocha S."/>
            <person name="Dunkov B.C."/>
            <person name="Dunn P."/>
            <person name="Durbin K.J."/>
            <person name="Evangelista C.C."/>
            <person name="Ferraz C."/>
            <person name="Ferriera S."/>
            <person name="Fleischmann W."/>
            <person name="Fosler C."/>
            <person name="Gabrielian A.E."/>
            <person name="Garg N.S."/>
            <person name="Gelbart W.M."/>
            <person name="Glasser K."/>
            <person name="Glodek A."/>
            <person name="Gong F."/>
            <person name="Gorrell J.H."/>
            <person name="Gu Z."/>
            <person name="Guan P."/>
            <person name="Harris M."/>
            <person name="Harris N.L."/>
            <person name="Harvey D.A."/>
            <person name="Heiman T.J."/>
            <person name="Hernandez J.R."/>
            <person name="Houck J."/>
            <person name="Hostin D."/>
            <person name="Houston K.A."/>
            <person name="Howland T.J."/>
            <person name="Wei M.-H."/>
            <person name="Ibegwam C."/>
            <person name="Jalali M."/>
            <person name="Kalush F."/>
            <person name="Karpen G.H."/>
            <person name="Ke Z."/>
            <person name="Kennison J.A."/>
            <person name="Ketchum K.A."/>
            <person name="Kimmel B.E."/>
            <person name="Kodira C.D."/>
            <person name="Kraft C.L."/>
            <person name="Kravitz S."/>
            <person name="Kulp D."/>
            <person name="Lai Z."/>
            <person name="Lasko P."/>
            <person name="Lei Y."/>
            <person name="Levitsky A.A."/>
            <person name="Li J.H."/>
            <person name="Li Z."/>
            <person name="Liang Y."/>
            <person name="Lin X."/>
            <person name="Liu X."/>
            <person name="Mattei B."/>
            <person name="McIntosh T.C."/>
            <person name="McLeod M.P."/>
            <person name="McPherson D."/>
            <person name="Merkulov G."/>
            <person name="Milshina N.V."/>
            <person name="Mobarry C."/>
            <person name="Morris J."/>
            <person name="Moshrefi A."/>
            <person name="Mount S.M."/>
            <person name="Moy M."/>
            <person name="Murphy B."/>
            <person name="Murphy L."/>
            <person name="Muzny D.M."/>
            <person name="Nelson D.L."/>
            <person name="Nelson D.R."/>
            <person name="Nelson K.A."/>
            <person name="Nixon K."/>
            <person name="Nusskern D.R."/>
            <person name="Pacleb J.M."/>
            <person name="Palazzolo M."/>
            <person name="Pittman G.S."/>
            <person name="Pan S."/>
            <person name="Pollard J."/>
            <person name="Puri V."/>
            <person name="Reese M.G."/>
            <person name="Reinert K."/>
            <person name="Remington K."/>
            <person name="Saunders R.D.C."/>
            <person name="Scheeler F."/>
            <person name="Shen H."/>
            <person name="Shue B.C."/>
            <person name="Siden-Kiamos I."/>
            <person name="Simpson M."/>
            <person name="Skupski M.P."/>
            <person name="Smith T.J."/>
            <person name="Spier E."/>
            <person name="Spradling A.C."/>
            <person name="Stapleton M."/>
            <person name="Strong R."/>
            <person name="Sun E."/>
            <person name="Svirskas R."/>
            <person name="Tector C."/>
            <person name="Turner R."/>
            <person name="Venter E."/>
            <person name="Wang A.H."/>
            <person name="Wang X."/>
            <person name="Wang Z.-Y."/>
            <person name="Wassarman D.A."/>
            <person name="Weinstock G.M."/>
            <person name="Weissenbach J."/>
            <person name="Williams S.M."/>
            <person name="Woodage T."/>
            <person name="Worley K.C."/>
            <person name="Wu D."/>
            <person name="Yang S."/>
            <person name="Yao Q.A."/>
            <person name="Ye J."/>
            <person name="Yeh R.-F."/>
            <person name="Zaveri J.S."/>
            <person name="Zhan M."/>
            <person name="Zhang G."/>
            <person name="Zhao Q."/>
            <person name="Zheng L."/>
            <person name="Zheng X.H."/>
            <person name="Zhong F.N."/>
            <person name="Zhong W."/>
            <person name="Zhou X."/>
            <person name="Zhu S.C."/>
            <person name="Zhu X."/>
            <person name="Smith H.O."/>
            <person name="Gibbs R.A."/>
            <person name="Myers E.W."/>
            <person name="Rubin G.M."/>
            <person name="Venter J.C."/>
        </authorList>
    </citation>
    <scope>NUCLEOTIDE SEQUENCE [LARGE SCALE GENOMIC DNA]</scope>
    <source>
        <strain>Berkeley</strain>
    </source>
</reference>
<reference key="3">
    <citation type="journal article" date="2002" name="Genome Biol.">
        <title>Annotation of the Drosophila melanogaster euchromatic genome: a systematic review.</title>
        <authorList>
            <person name="Misra S."/>
            <person name="Crosby M.A."/>
            <person name="Mungall C.J."/>
            <person name="Matthews B.B."/>
            <person name="Campbell K.S."/>
            <person name="Hradecky P."/>
            <person name="Huang Y."/>
            <person name="Kaminker J.S."/>
            <person name="Millburn G.H."/>
            <person name="Prochnik S.E."/>
            <person name="Smith C.D."/>
            <person name="Tupy J.L."/>
            <person name="Whitfield E.J."/>
            <person name="Bayraktaroglu L."/>
            <person name="Berman B.P."/>
            <person name="Bettencourt B.R."/>
            <person name="Celniker S.E."/>
            <person name="de Grey A.D.N.J."/>
            <person name="Drysdale R.A."/>
            <person name="Harris N.L."/>
            <person name="Richter J."/>
            <person name="Russo S."/>
            <person name="Schroeder A.J."/>
            <person name="Shu S.Q."/>
            <person name="Stapleton M."/>
            <person name="Yamada C."/>
            <person name="Ashburner M."/>
            <person name="Gelbart W.M."/>
            <person name="Rubin G.M."/>
            <person name="Lewis S.E."/>
        </authorList>
    </citation>
    <scope>GENOME REANNOTATION</scope>
    <source>
        <strain>Berkeley</strain>
    </source>
</reference>
<reference key="4">
    <citation type="journal article" date="2002" name="Genome Biol.">
        <title>A Drosophila full-length cDNA resource.</title>
        <authorList>
            <person name="Stapleton M."/>
            <person name="Carlson J.W."/>
            <person name="Brokstein P."/>
            <person name="Yu C."/>
            <person name="Champe M."/>
            <person name="George R.A."/>
            <person name="Guarin H."/>
            <person name="Kronmiller B."/>
            <person name="Pacleb J.M."/>
            <person name="Park S."/>
            <person name="Wan K.H."/>
            <person name="Rubin G.M."/>
            <person name="Celniker S.E."/>
        </authorList>
    </citation>
    <scope>NUCLEOTIDE SEQUENCE [LARGE SCALE MRNA]</scope>
    <source>
        <strain>Berkeley</strain>
        <tissue>Head</tissue>
    </source>
</reference>
<name>ANGEL_DROME</name>
<keyword id="KW-0217">Developmental protein</keyword>
<keyword id="KW-1185">Reference proteome</keyword>
<organism>
    <name type="scientific">Drosophila melanogaster</name>
    <name type="common">Fruit fly</name>
    <dbReference type="NCBI Taxonomy" id="7227"/>
    <lineage>
        <taxon>Eukaryota</taxon>
        <taxon>Metazoa</taxon>
        <taxon>Ecdysozoa</taxon>
        <taxon>Arthropoda</taxon>
        <taxon>Hexapoda</taxon>
        <taxon>Insecta</taxon>
        <taxon>Pterygota</taxon>
        <taxon>Neoptera</taxon>
        <taxon>Endopterygota</taxon>
        <taxon>Diptera</taxon>
        <taxon>Brachycera</taxon>
        <taxon>Muscomorpha</taxon>
        <taxon>Ephydroidea</taxon>
        <taxon>Drosophilidae</taxon>
        <taxon>Drosophila</taxon>
        <taxon>Sophophora</taxon>
    </lineage>
</organism>
<sequence>MYRSLLHNVSLKATSRIIRRSVSSQAKGASGKRKQKAKEMESSHDRNRRWTSLGNQAEGRDPHKCSSFKVVSYNILAQDLLLEHLFLYVGIPHEFLSWQRRQQNLLRELLKLDPDILCLQEMQFDHLPVLVQRLRMGNGKKLAYVYKKKTGCRTDGCAIVYDSSKFELLDHQAVELYDQAVALLNRDNVALFARFRFKKQQEQQKEFVVATTHLLFNTKRSDVRCAQVERILEELQSFSTDTPIVLTGDFNSLPDSSPIEFLVGKNGDVDSTACPEPLHFEIIDSGEGTASTYQNEWVIVDYILRSLGSRSRHKLLPLSVYSLPSINRCIGAGQIPNYRLGSDHYALGAVFTVV</sequence>
<accession>Q24239</accession>
<accession>Q9W1L3</accession>
<feature type="chain" id="PRO_0000218572" description="Protein angel">
    <location>
        <begin position="1"/>
        <end position="354"/>
    </location>
</feature>
<feature type="region of interest" description="Disordered" evidence="1">
    <location>
        <begin position="22"/>
        <end position="59"/>
    </location>
</feature>
<feature type="sequence conflict" description="In Ref. 1; CAA59746." evidence="2" ref="1">
    <original>A</original>
    <variation>T</variation>
    <location>
        <position position="37"/>
    </location>
</feature>
<feature type="sequence conflict" description="In Ref. 1; CAA59746." evidence="2" ref="1">
    <original>V</original>
    <variation>A</variation>
    <location>
        <position position="353"/>
    </location>
</feature>
<gene>
    <name type="primary">angel</name>
    <name type="ORF">CG12273</name>
</gene>
<dbReference type="EMBL" id="X85743">
    <property type="protein sequence ID" value="CAA59746.1"/>
    <property type="molecule type" value="Genomic_DNA"/>
</dbReference>
<dbReference type="EMBL" id="AE013599">
    <property type="protein sequence ID" value="AAF47045.1"/>
    <property type="molecule type" value="Genomic_DNA"/>
</dbReference>
<dbReference type="EMBL" id="AY058301">
    <property type="protein sequence ID" value="AAL13530.1"/>
    <property type="molecule type" value="mRNA"/>
</dbReference>
<dbReference type="PIR" id="S71925">
    <property type="entry name" value="S71925"/>
</dbReference>
<dbReference type="RefSeq" id="NP_477204.1">
    <property type="nucleotide sequence ID" value="NM_057856.5"/>
</dbReference>
<dbReference type="SMR" id="Q24239"/>
<dbReference type="BioGRID" id="63346">
    <property type="interactions" value="4"/>
</dbReference>
<dbReference type="DIP" id="DIP-17505N"/>
<dbReference type="FunCoup" id="Q24239">
    <property type="interactions" value="31"/>
</dbReference>
<dbReference type="IntAct" id="Q24239">
    <property type="interactions" value="2"/>
</dbReference>
<dbReference type="STRING" id="7227.FBpp0071992"/>
<dbReference type="PaxDb" id="7227-FBpp0071992"/>
<dbReference type="DNASU" id="37748"/>
<dbReference type="EnsemblMetazoa" id="FBtr0072083">
    <property type="protein sequence ID" value="FBpp0071992"/>
    <property type="gene ID" value="FBgn0016762"/>
</dbReference>
<dbReference type="GeneID" id="37748"/>
<dbReference type="KEGG" id="dme:Dmel_CG12273"/>
<dbReference type="UCSC" id="CG12273-RA">
    <property type="organism name" value="d. melanogaster"/>
</dbReference>
<dbReference type="AGR" id="FB:FBgn0016762"/>
<dbReference type="CTD" id="37748"/>
<dbReference type="FlyBase" id="FBgn0016762">
    <property type="gene designation" value="angel"/>
</dbReference>
<dbReference type="VEuPathDB" id="VectorBase:FBgn0016762"/>
<dbReference type="eggNOG" id="KOG2338">
    <property type="taxonomic scope" value="Eukaryota"/>
</dbReference>
<dbReference type="GeneTree" id="ENSGT00940000169613"/>
<dbReference type="HOGENOM" id="CLU_016428_0_0_1"/>
<dbReference type="InParanoid" id="Q24239"/>
<dbReference type="OMA" id="HYLGSDH"/>
<dbReference type="OrthoDB" id="10253982at2759"/>
<dbReference type="PhylomeDB" id="Q24239"/>
<dbReference type="BioGRID-ORCS" id="37748">
    <property type="hits" value="0 hits in 3 CRISPR screens"/>
</dbReference>
<dbReference type="GenomeRNAi" id="37748"/>
<dbReference type="PRO" id="PR:Q24239"/>
<dbReference type="Proteomes" id="UP000000803">
    <property type="component" value="Chromosome 2R"/>
</dbReference>
<dbReference type="Bgee" id="FBgn0016762">
    <property type="expression patterns" value="Expressed in oviduct (Drosophila) and 60 other cell types or tissues"/>
</dbReference>
<dbReference type="GO" id="GO:0005759">
    <property type="term" value="C:mitochondrial matrix"/>
    <property type="evidence" value="ECO:0000314"/>
    <property type="project" value="FlyBase"/>
</dbReference>
<dbReference type="GO" id="GO:0003824">
    <property type="term" value="F:catalytic activity"/>
    <property type="evidence" value="ECO:0007669"/>
    <property type="project" value="InterPro"/>
</dbReference>
<dbReference type="GO" id="GO:0003730">
    <property type="term" value="F:mRNA 3'-UTR binding"/>
    <property type="evidence" value="ECO:0000318"/>
    <property type="project" value="GO_Central"/>
</dbReference>
<dbReference type="GO" id="GO:0090616">
    <property type="term" value="P:mitochondrial mRNA 3'-end processing"/>
    <property type="evidence" value="ECO:0000315"/>
    <property type="project" value="FlyBase"/>
</dbReference>
<dbReference type="FunFam" id="3.60.10.10:FF:000129">
    <property type="entry name" value="Protein angel"/>
    <property type="match status" value="1"/>
</dbReference>
<dbReference type="Gene3D" id="3.60.10.10">
    <property type="entry name" value="Endonuclease/exonuclease/phosphatase"/>
    <property type="match status" value="1"/>
</dbReference>
<dbReference type="InterPro" id="IPR050410">
    <property type="entry name" value="CCR4/nocturin_mRNA_transcr"/>
</dbReference>
<dbReference type="InterPro" id="IPR036691">
    <property type="entry name" value="Endo/exonu/phosph_ase_sf"/>
</dbReference>
<dbReference type="InterPro" id="IPR005135">
    <property type="entry name" value="Endo/exonuclease/phosphatase"/>
</dbReference>
<dbReference type="PANTHER" id="PTHR12121">
    <property type="entry name" value="CARBON CATABOLITE REPRESSOR PROTEIN 4"/>
    <property type="match status" value="1"/>
</dbReference>
<dbReference type="PANTHER" id="PTHR12121:SF34">
    <property type="entry name" value="PROTEIN ANGEL"/>
    <property type="match status" value="1"/>
</dbReference>
<dbReference type="Pfam" id="PF03372">
    <property type="entry name" value="Exo_endo_phos"/>
    <property type="match status" value="1"/>
</dbReference>
<dbReference type="SUPFAM" id="SSF56219">
    <property type="entry name" value="DNase I-like"/>
    <property type="match status" value="1"/>
</dbReference>